<keyword id="KW-0210">Decarboxylase</keyword>
<keyword id="KW-0456">Lyase</keyword>
<keyword id="KW-0665">Pyrimidine biosynthesis</keyword>
<keyword id="KW-1185">Reference proteome</keyword>
<gene>
    <name evidence="1" type="primary">pyrF</name>
    <name type="ordered locus">YPO2227</name>
    <name type="ordered locus">y2069</name>
    <name type="ordered locus">YP_2026</name>
</gene>
<name>PYRF_YERPE</name>
<organism>
    <name type="scientific">Yersinia pestis</name>
    <dbReference type="NCBI Taxonomy" id="632"/>
    <lineage>
        <taxon>Bacteria</taxon>
        <taxon>Pseudomonadati</taxon>
        <taxon>Pseudomonadota</taxon>
        <taxon>Gammaproteobacteria</taxon>
        <taxon>Enterobacterales</taxon>
        <taxon>Yersiniaceae</taxon>
        <taxon>Yersinia</taxon>
    </lineage>
</organism>
<accession>P58644</accession>
<accession>Q0WET9</accession>
<protein>
    <recommendedName>
        <fullName evidence="1">Orotidine 5'-phosphate decarboxylase</fullName>
        <ecNumber evidence="1">4.1.1.23</ecNumber>
    </recommendedName>
    <alternativeName>
        <fullName evidence="1">OMP decarboxylase</fullName>
        <shortName evidence="1">OMPDCase</shortName>
        <shortName evidence="1">OMPdecase</shortName>
    </alternativeName>
</protein>
<feature type="chain" id="PRO_0000134606" description="Orotidine 5'-phosphate decarboxylase">
    <location>
        <begin position="1"/>
        <end position="245"/>
    </location>
</feature>
<feature type="active site" description="Proton donor" evidence="1">
    <location>
        <position position="73"/>
    </location>
</feature>
<feature type="binding site" evidence="1">
    <location>
        <position position="22"/>
    </location>
    <ligand>
        <name>substrate</name>
    </ligand>
</feature>
<feature type="binding site" evidence="1">
    <location>
        <position position="44"/>
    </location>
    <ligand>
        <name>substrate</name>
    </ligand>
</feature>
<feature type="binding site" evidence="1">
    <location>
        <begin position="71"/>
        <end position="80"/>
    </location>
    <ligand>
        <name>substrate</name>
    </ligand>
</feature>
<feature type="binding site" evidence="1">
    <location>
        <position position="131"/>
    </location>
    <ligand>
        <name>substrate</name>
    </ligand>
</feature>
<feature type="binding site" evidence="1">
    <location>
        <position position="192"/>
    </location>
    <ligand>
        <name>substrate</name>
    </ligand>
</feature>
<feature type="binding site" evidence="1">
    <location>
        <position position="201"/>
    </location>
    <ligand>
        <name>substrate</name>
    </ligand>
</feature>
<feature type="binding site" evidence="1">
    <location>
        <position position="221"/>
    </location>
    <ligand>
        <name>substrate</name>
    </ligand>
</feature>
<feature type="binding site" evidence="1">
    <location>
        <position position="222"/>
    </location>
    <ligand>
        <name>substrate</name>
    </ligand>
</feature>
<sequence>MTSATKTNNSGSISSPIVVALDYANKDAALAFADQVSPQDCRLKVGKEMFTLYGPELIRDLHQRGFDVFLDLKFHDIPNTTARAVAAAAELGVWMVNVHASGGARMMSAAKEALLPYGAQAPLLIAVTVLTSMDGEDLRDIGITISPAEQAERLAKLTWDCGLDGVVCSAHEAVRLKQVCGEDFSLVTPGIRPQGSEAGDQRRIMTPEQAVAVGVDYMVIGRPITQSPDPEKTLREILASLTKVA</sequence>
<reference key="1">
    <citation type="journal article" date="2001" name="Nature">
        <title>Genome sequence of Yersinia pestis, the causative agent of plague.</title>
        <authorList>
            <person name="Parkhill J."/>
            <person name="Wren B.W."/>
            <person name="Thomson N.R."/>
            <person name="Titball R.W."/>
            <person name="Holden M.T.G."/>
            <person name="Prentice M.B."/>
            <person name="Sebaihia M."/>
            <person name="James K.D."/>
            <person name="Churcher C.M."/>
            <person name="Mungall K.L."/>
            <person name="Baker S."/>
            <person name="Basham D."/>
            <person name="Bentley S.D."/>
            <person name="Brooks K."/>
            <person name="Cerdeno-Tarraga A.-M."/>
            <person name="Chillingworth T."/>
            <person name="Cronin A."/>
            <person name="Davies R.M."/>
            <person name="Davis P."/>
            <person name="Dougan G."/>
            <person name="Feltwell T."/>
            <person name="Hamlin N."/>
            <person name="Holroyd S."/>
            <person name="Jagels K."/>
            <person name="Karlyshev A.V."/>
            <person name="Leather S."/>
            <person name="Moule S."/>
            <person name="Oyston P.C.F."/>
            <person name="Quail M.A."/>
            <person name="Rutherford K.M."/>
            <person name="Simmonds M."/>
            <person name="Skelton J."/>
            <person name="Stevens K."/>
            <person name="Whitehead S."/>
            <person name="Barrell B.G."/>
        </authorList>
    </citation>
    <scope>NUCLEOTIDE SEQUENCE [LARGE SCALE GENOMIC DNA]</scope>
    <source>
        <strain>CO-92 / Biovar Orientalis</strain>
    </source>
</reference>
<reference key="2">
    <citation type="journal article" date="2002" name="J. Bacteriol.">
        <title>Genome sequence of Yersinia pestis KIM.</title>
        <authorList>
            <person name="Deng W."/>
            <person name="Burland V."/>
            <person name="Plunkett G. III"/>
            <person name="Boutin A."/>
            <person name="Mayhew G.F."/>
            <person name="Liss P."/>
            <person name="Perna N.T."/>
            <person name="Rose D.J."/>
            <person name="Mau B."/>
            <person name="Zhou S."/>
            <person name="Schwartz D.C."/>
            <person name="Fetherston J.D."/>
            <person name="Lindler L.E."/>
            <person name="Brubaker R.R."/>
            <person name="Plano G.V."/>
            <person name="Straley S.C."/>
            <person name="McDonough K.A."/>
            <person name="Nilles M.L."/>
            <person name="Matson J.S."/>
            <person name="Blattner F.R."/>
            <person name="Perry R.D."/>
        </authorList>
    </citation>
    <scope>NUCLEOTIDE SEQUENCE [LARGE SCALE GENOMIC DNA]</scope>
    <source>
        <strain>KIM10+ / Biovar Mediaevalis</strain>
    </source>
</reference>
<reference key="3">
    <citation type="journal article" date="2004" name="DNA Res.">
        <title>Complete genome sequence of Yersinia pestis strain 91001, an isolate avirulent to humans.</title>
        <authorList>
            <person name="Song Y."/>
            <person name="Tong Z."/>
            <person name="Wang J."/>
            <person name="Wang L."/>
            <person name="Guo Z."/>
            <person name="Han Y."/>
            <person name="Zhang J."/>
            <person name="Pei D."/>
            <person name="Zhou D."/>
            <person name="Qin H."/>
            <person name="Pang X."/>
            <person name="Han Y."/>
            <person name="Zhai J."/>
            <person name="Li M."/>
            <person name="Cui B."/>
            <person name="Qi Z."/>
            <person name="Jin L."/>
            <person name="Dai R."/>
            <person name="Chen F."/>
            <person name="Li S."/>
            <person name="Ye C."/>
            <person name="Du Z."/>
            <person name="Lin W."/>
            <person name="Wang J."/>
            <person name="Yu J."/>
            <person name="Yang H."/>
            <person name="Wang J."/>
            <person name="Huang P."/>
            <person name="Yang R."/>
        </authorList>
    </citation>
    <scope>NUCLEOTIDE SEQUENCE [LARGE SCALE GENOMIC DNA]</scope>
    <source>
        <strain>91001 / Biovar Mediaevalis</strain>
    </source>
</reference>
<proteinExistence type="inferred from homology"/>
<dbReference type="EC" id="4.1.1.23" evidence="1"/>
<dbReference type="EMBL" id="AL590842">
    <property type="protein sequence ID" value="CAL20857.1"/>
    <property type="molecule type" value="Genomic_DNA"/>
</dbReference>
<dbReference type="EMBL" id="AE009952">
    <property type="protein sequence ID" value="AAM85633.1"/>
    <property type="molecule type" value="Genomic_DNA"/>
</dbReference>
<dbReference type="EMBL" id="AE017042">
    <property type="protein sequence ID" value="AAS62242.1"/>
    <property type="molecule type" value="Genomic_DNA"/>
</dbReference>
<dbReference type="PIR" id="AF0271">
    <property type="entry name" value="AF0271"/>
</dbReference>
<dbReference type="RefSeq" id="WP_002210613.1">
    <property type="nucleotide sequence ID" value="NZ_WUCM01000001.1"/>
</dbReference>
<dbReference type="RefSeq" id="YP_002347199.1">
    <property type="nucleotide sequence ID" value="NC_003143.1"/>
</dbReference>
<dbReference type="SMR" id="P58644"/>
<dbReference type="IntAct" id="P58644">
    <property type="interactions" value="4"/>
</dbReference>
<dbReference type="STRING" id="214092.YPO2227"/>
<dbReference type="PaxDb" id="214092-YPO2227"/>
<dbReference type="DNASU" id="1147016"/>
<dbReference type="EnsemblBacteria" id="AAS62242">
    <property type="protein sequence ID" value="AAS62242"/>
    <property type="gene ID" value="YP_2026"/>
</dbReference>
<dbReference type="GeneID" id="57976441"/>
<dbReference type="KEGG" id="ype:YPO2227"/>
<dbReference type="KEGG" id="ypk:y2069"/>
<dbReference type="KEGG" id="ypm:YP_2026"/>
<dbReference type="PATRIC" id="fig|214092.21.peg.2623"/>
<dbReference type="eggNOG" id="COG0284">
    <property type="taxonomic scope" value="Bacteria"/>
</dbReference>
<dbReference type="HOGENOM" id="CLU_067069_0_0_6"/>
<dbReference type="OMA" id="FWKVGLE"/>
<dbReference type="OrthoDB" id="9806203at2"/>
<dbReference type="UniPathway" id="UPA00070">
    <property type="reaction ID" value="UER00120"/>
</dbReference>
<dbReference type="Proteomes" id="UP000000815">
    <property type="component" value="Chromosome"/>
</dbReference>
<dbReference type="Proteomes" id="UP000001019">
    <property type="component" value="Chromosome"/>
</dbReference>
<dbReference type="Proteomes" id="UP000002490">
    <property type="component" value="Chromosome"/>
</dbReference>
<dbReference type="GO" id="GO:0005829">
    <property type="term" value="C:cytosol"/>
    <property type="evidence" value="ECO:0000318"/>
    <property type="project" value="GO_Central"/>
</dbReference>
<dbReference type="GO" id="GO:0004590">
    <property type="term" value="F:orotidine-5'-phosphate decarboxylase activity"/>
    <property type="evidence" value="ECO:0000318"/>
    <property type="project" value="GO_Central"/>
</dbReference>
<dbReference type="GO" id="GO:0006207">
    <property type="term" value="P:'de novo' pyrimidine nucleobase biosynthetic process"/>
    <property type="evidence" value="ECO:0000318"/>
    <property type="project" value="GO_Central"/>
</dbReference>
<dbReference type="GO" id="GO:0044205">
    <property type="term" value="P:'de novo' UMP biosynthetic process"/>
    <property type="evidence" value="ECO:0007669"/>
    <property type="project" value="UniProtKB-UniRule"/>
</dbReference>
<dbReference type="CDD" id="cd04725">
    <property type="entry name" value="OMP_decarboxylase_like"/>
    <property type="match status" value="1"/>
</dbReference>
<dbReference type="FunFam" id="3.20.20.70:FF:000015">
    <property type="entry name" value="Orotidine 5'-phosphate decarboxylase"/>
    <property type="match status" value="1"/>
</dbReference>
<dbReference type="Gene3D" id="3.20.20.70">
    <property type="entry name" value="Aldolase class I"/>
    <property type="match status" value="1"/>
</dbReference>
<dbReference type="HAMAP" id="MF_01200_B">
    <property type="entry name" value="OMPdecase_type1_B"/>
    <property type="match status" value="1"/>
</dbReference>
<dbReference type="InterPro" id="IPR013785">
    <property type="entry name" value="Aldolase_TIM"/>
</dbReference>
<dbReference type="InterPro" id="IPR014732">
    <property type="entry name" value="OMPdecase"/>
</dbReference>
<dbReference type="InterPro" id="IPR018089">
    <property type="entry name" value="OMPdecase_AS"/>
</dbReference>
<dbReference type="InterPro" id="IPR047596">
    <property type="entry name" value="OMPdecase_bac"/>
</dbReference>
<dbReference type="InterPro" id="IPR001754">
    <property type="entry name" value="OMPdeCOase_dom"/>
</dbReference>
<dbReference type="InterPro" id="IPR011060">
    <property type="entry name" value="RibuloseP-bd_barrel"/>
</dbReference>
<dbReference type="NCBIfam" id="NF001273">
    <property type="entry name" value="PRK00230.1"/>
    <property type="match status" value="1"/>
</dbReference>
<dbReference type="NCBIfam" id="TIGR01740">
    <property type="entry name" value="pyrF"/>
    <property type="match status" value="1"/>
</dbReference>
<dbReference type="PANTHER" id="PTHR32119">
    <property type="entry name" value="OROTIDINE 5'-PHOSPHATE DECARBOXYLASE"/>
    <property type="match status" value="1"/>
</dbReference>
<dbReference type="PANTHER" id="PTHR32119:SF2">
    <property type="entry name" value="OROTIDINE 5'-PHOSPHATE DECARBOXYLASE"/>
    <property type="match status" value="1"/>
</dbReference>
<dbReference type="Pfam" id="PF00215">
    <property type="entry name" value="OMPdecase"/>
    <property type="match status" value="1"/>
</dbReference>
<dbReference type="SMART" id="SM00934">
    <property type="entry name" value="OMPdecase"/>
    <property type="match status" value="1"/>
</dbReference>
<dbReference type="SUPFAM" id="SSF51366">
    <property type="entry name" value="Ribulose-phoshate binding barrel"/>
    <property type="match status" value="1"/>
</dbReference>
<dbReference type="PROSITE" id="PS00156">
    <property type="entry name" value="OMPDECASE"/>
    <property type="match status" value="1"/>
</dbReference>
<comment type="function">
    <text evidence="1">Catalyzes the decarboxylation of orotidine 5'-monophosphate (OMP) to uridine 5'-monophosphate (UMP).</text>
</comment>
<comment type="catalytic activity">
    <reaction evidence="1">
        <text>orotidine 5'-phosphate + H(+) = UMP + CO2</text>
        <dbReference type="Rhea" id="RHEA:11596"/>
        <dbReference type="ChEBI" id="CHEBI:15378"/>
        <dbReference type="ChEBI" id="CHEBI:16526"/>
        <dbReference type="ChEBI" id="CHEBI:57538"/>
        <dbReference type="ChEBI" id="CHEBI:57865"/>
        <dbReference type="EC" id="4.1.1.23"/>
    </reaction>
</comment>
<comment type="pathway">
    <text evidence="1">Pyrimidine metabolism; UMP biosynthesis via de novo pathway; UMP from orotate: step 2/2.</text>
</comment>
<comment type="subunit">
    <text evidence="1">Homodimer.</text>
</comment>
<comment type="similarity">
    <text evidence="1">Belongs to the OMP decarboxylase family. Type 1 subfamily.</text>
</comment>
<evidence type="ECO:0000255" key="1">
    <source>
        <dbReference type="HAMAP-Rule" id="MF_01200"/>
    </source>
</evidence>